<proteinExistence type="evidence at protein level"/>
<protein>
    <recommendedName>
        <fullName>Transcription termination factor 2, mitochondrial</fullName>
    </recommendedName>
    <alternativeName>
        <fullName>Mitochondrial transcription termination factor 2</fullName>
        <shortName>mTERF2</shortName>
    </alternativeName>
    <alternativeName>
        <fullName>mTERF domain-containing protein 3, mitochondrial</fullName>
    </alternativeName>
</protein>
<accession>Q8BKY8</accession>
<sequence>MPWRLPTGHQLCRLCLLRKPRPALKIKPSSACVTYGTDSQSDKENKRTVEKLSACSVDIRKIRRLKGWVLLEEETYVEEIANILKELGANKTVIASILERCPEAIICSPAAVNTKRKLWQMVCKNEAELVQLIEQFPESFFTVKNQENQKLNVQFFQELGLRNVVISRFLTTASSIFHNPVENNKQMIGVLQESYLNLGGSEANAKVWLLKLLSQNPFIVLHSPRAVGETLKCLQGQGFTDSEVLQLLSKLKGFLFQLQPGSIQNSISFTKTTFECTDYDLRQLVVKCPALLCYPASVLEERIQALLKEGISIAQIRESPMVLELTPQIIQYRIRKLNSLGYGIKDGHLASLNGTKKEFEANFSKMQAKQGRPLFNPVASLKVEE</sequence>
<dbReference type="EMBL" id="AK047778">
    <property type="protein sequence ID" value="BAC33153.1"/>
    <property type="molecule type" value="mRNA"/>
</dbReference>
<dbReference type="EMBL" id="BC046619">
    <property type="protein sequence ID" value="AAH46619.1"/>
    <property type="molecule type" value="mRNA"/>
</dbReference>
<dbReference type="CCDS" id="CCDS24088.1"/>
<dbReference type="RefSeq" id="NP_001366453.1">
    <property type="nucleotide sequence ID" value="NM_001379524.1"/>
</dbReference>
<dbReference type="RefSeq" id="NP_001366454.1">
    <property type="nucleotide sequence ID" value="NM_001379525.1"/>
</dbReference>
<dbReference type="RefSeq" id="NP_001366455.1">
    <property type="nucleotide sequence ID" value="NM_001379526.1"/>
</dbReference>
<dbReference type="RefSeq" id="NP_083108.1">
    <property type="nucleotide sequence ID" value="NM_028832.3"/>
</dbReference>
<dbReference type="SMR" id="Q8BKY8"/>
<dbReference type="BioGRID" id="216598">
    <property type="interactions" value="2"/>
</dbReference>
<dbReference type="FunCoup" id="Q8BKY8">
    <property type="interactions" value="685"/>
</dbReference>
<dbReference type="STRING" id="10090.ENSMUSP00000062762"/>
<dbReference type="iPTMnet" id="Q8BKY8"/>
<dbReference type="PhosphoSitePlus" id="Q8BKY8"/>
<dbReference type="jPOST" id="Q8BKY8"/>
<dbReference type="PaxDb" id="10090-ENSMUSP00000062762"/>
<dbReference type="PeptideAtlas" id="Q8BKY8"/>
<dbReference type="ProteomicsDB" id="287630"/>
<dbReference type="Pumba" id="Q8BKY8"/>
<dbReference type="Antibodypedia" id="1265">
    <property type="antibodies" value="72 antibodies from 20 providers"/>
</dbReference>
<dbReference type="DNASU" id="74238"/>
<dbReference type="Ensembl" id="ENSMUST00000050813.4">
    <property type="protein sequence ID" value="ENSMUSP00000062762.3"/>
    <property type="gene ID" value="ENSMUSG00000049038.4"/>
</dbReference>
<dbReference type="GeneID" id="74238"/>
<dbReference type="KEGG" id="mmu:74238"/>
<dbReference type="UCSC" id="uc007gld.2">
    <property type="organism name" value="mouse"/>
</dbReference>
<dbReference type="AGR" id="MGI:1921488"/>
<dbReference type="CTD" id="80298"/>
<dbReference type="MGI" id="MGI:1921488">
    <property type="gene designation" value="Mterf2"/>
</dbReference>
<dbReference type="VEuPathDB" id="HostDB:ENSMUSG00000049038"/>
<dbReference type="eggNOG" id="KOG1267">
    <property type="taxonomic scope" value="Eukaryota"/>
</dbReference>
<dbReference type="GeneTree" id="ENSGT00530000063817"/>
<dbReference type="HOGENOM" id="CLU_058644_0_0_1"/>
<dbReference type="InParanoid" id="Q8BKY8"/>
<dbReference type="OMA" id="PEAVLCN"/>
<dbReference type="OrthoDB" id="9868878at2759"/>
<dbReference type="PhylomeDB" id="Q8BKY8"/>
<dbReference type="TreeFam" id="TF330821"/>
<dbReference type="BioGRID-ORCS" id="74238">
    <property type="hits" value="4 hits in 76 CRISPR screens"/>
</dbReference>
<dbReference type="PRO" id="PR:Q8BKY8"/>
<dbReference type="Proteomes" id="UP000000589">
    <property type="component" value="Chromosome 10"/>
</dbReference>
<dbReference type="RNAct" id="Q8BKY8">
    <property type="molecule type" value="protein"/>
</dbReference>
<dbReference type="Bgee" id="ENSMUSG00000049038">
    <property type="expression patterns" value="Expressed in intercostal muscle and 235 other cell types or tissues"/>
</dbReference>
<dbReference type="ExpressionAtlas" id="Q8BKY8">
    <property type="expression patterns" value="baseline and differential"/>
</dbReference>
<dbReference type="GO" id="GO:0042645">
    <property type="term" value="C:mitochondrial nucleoid"/>
    <property type="evidence" value="ECO:0000314"/>
    <property type="project" value="UniProtKB"/>
</dbReference>
<dbReference type="GO" id="GO:0005739">
    <property type="term" value="C:mitochondrion"/>
    <property type="evidence" value="ECO:0007005"/>
    <property type="project" value="MGI"/>
</dbReference>
<dbReference type="GO" id="GO:0003677">
    <property type="term" value="F:DNA binding"/>
    <property type="evidence" value="ECO:0000250"/>
    <property type="project" value="UniProtKB"/>
</dbReference>
<dbReference type="GO" id="GO:0003690">
    <property type="term" value="F:double-stranded DNA binding"/>
    <property type="evidence" value="ECO:0007669"/>
    <property type="project" value="InterPro"/>
</dbReference>
<dbReference type="GO" id="GO:0006355">
    <property type="term" value="P:regulation of DNA-templated transcription"/>
    <property type="evidence" value="ECO:0007669"/>
    <property type="project" value="InterPro"/>
</dbReference>
<dbReference type="FunFam" id="1.25.70.10:FF:000003">
    <property type="entry name" value="transcription termination factor 2, mitochondrial"/>
    <property type="match status" value="1"/>
</dbReference>
<dbReference type="Gene3D" id="1.25.70.10">
    <property type="entry name" value="Transcription termination factor 3, mitochondrial"/>
    <property type="match status" value="2"/>
</dbReference>
<dbReference type="InterPro" id="IPR003690">
    <property type="entry name" value="MTERF"/>
</dbReference>
<dbReference type="InterPro" id="IPR038538">
    <property type="entry name" value="MTERF_sf"/>
</dbReference>
<dbReference type="PANTHER" id="PTHR15437:SF1">
    <property type="entry name" value="TRANSCRIPTION TERMINATION FACTOR 2, MITOCHONDRIAL"/>
    <property type="match status" value="1"/>
</dbReference>
<dbReference type="PANTHER" id="PTHR15437">
    <property type="entry name" value="TRANSCRIPTION TERMINATION FACTOR, MITOCHONDRIAL"/>
    <property type="match status" value="1"/>
</dbReference>
<dbReference type="Pfam" id="PF02536">
    <property type="entry name" value="mTERF"/>
    <property type="match status" value="1"/>
</dbReference>
<dbReference type="SMART" id="SM00733">
    <property type="entry name" value="Mterf"/>
    <property type="match status" value="4"/>
</dbReference>
<gene>
    <name type="primary">Mterf2</name>
    <name type="synonym">Mterfd3</name>
</gene>
<evidence type="ECO:0000250" key="1">
    <source>
        <dbReference type="UniProtKB" id="Q49AM1"/>
    </source>
</evidence>
<evidence type="ECO:0000269" key="2">
    <source>
    </source>
</evidence>
<evidence type="ECO:0000305" key="3"/>
<reference key="1">
    <citation type="journal article" date="2005" name="Science">
        <title>The transcriptional landscape of the mammalian genome.</title>
        <authorList>
            <person name="Carninci P."/>
            <person name="Kasukawa T."/>
            <person name="Katayama S."/>
            <person name="Gough J."/>
            <person name="Frith M.C."/>
            <person name="Maeda N."/>
            <person name="Oyama R."/>
            <person name="Ravasi T."/>
            <person name="Lenhard B."/>
            <person name="Wells C."/>
            <person name="Kodzius R."/>
            <person name="Shimokawa K."/>
            <person name="Bajic V.B."/>
            <person name="Brenner S.E."/>
            <person name="Batalov S."/>
            <person name="Forrest A.R."/>
            <person name="Zavolan M."/>
            <person name="Davis M.J."/>
            <person name="Wilming L.G."/>
            <person name="Aidinis V."/>
            <person name="Allen J.E."/>
            <person name="Ambesi-Impiombato A."/>
            <person name="Apweiler R."/>
            <person name="Aturaliya R.N."/>
            <person name="Bailey T.L."/>
            <person name="Bansal M."/>
            <person name="Baxter L."/>
            <person name="Beisel K.W."/>
            <person name="Bersano T."/>
            <person name="Bono H."/>
            <person name="Chalk A.M."/>
            <person name="Chiu K.P."/>
            <person name="Choudhary V."/>
            <person name="Christoffels A."/>
            <person name="Clutterbuck D.R."/>
            <person name="Crowe M.L."/>
            <person name="Dalla E."/>
            <person name="Dalrymple B.P."/>
            <person name="de Bono B."/>
            <person name="Della Gatta G."/>
            <person name="di Bernardo D."/>
            <person name="Down T."/>
            <person name="Engstrom P."/>
            <person name="Fagiolini M."/>
            <person name="Faulkner G."/>
            <person name="Fletcher C.F."/>
            <person name="Fukushima T."/>
            <person name="Furuno M."/>
            <person name="Futaki S."/>
            <person name="Gariboldi M."/>
            <person name="Georgii-Hemming P."/>
            <person name="Gingeras T.R."/>
            <person name="Gojobori T."/>
            <person name="Green R.E."/>
            <person name="Gustincich S."/>
            <person name="Harbers M."/>
            <person name="Hayashi Y."/>
            <person name="Hensch T.K."/>
            <person name="Hirokawa N."/>
            <person name="Hill D."/>
            <person name="Huminiecki L."/>
            <person name="Iacono M."/>
            <person name="Ikeo K."/>
            <person name="Iwama A."/>
            <person name="Ishikawa T."/>
            <person name="Jakt M."/>
            <person name="Kanapin A."/>
            <person name="Katoh M."/>
            <person name="Kawasawa Y."/>
            <person name="Kelso J."/>
            <person name="Kitamura H."/>
            <person name="Kitano H."/>
            <person name="Kollias G."/>
            <person name="Krishnan S.P."/>
            <person name="Kruger A."/>
            <person name="Kummerfeld S.K."/>
            <person name="Kurochkin I.V."/>
            <person name="Lareau L.F."/>
            <person name="Lazarevic D."/>
            <person name="Lipovich L."/>
            <person name="Liu J."/>
            <person name="Liuni S."/>
            <person name="McWilliam S."/>
            <person name="Madan Babu M."/>
            <person name="Madera M."/>
            <person name="Marchionni L."/>
            <person name="Matsuda H."/>
            <person name="Matsuzawa S."/>
            <person name="Miki H."/>
            <person name="Mignone F."/>
            <person name="Miyake S."/>
            <person name="Morris K."/>
            <person name="Mottagui-Tabar S."/>
            <person name="Mulder N."/>
            <person name="Nakano N."/>
            <person name="Nakauchi H."/>
            <person name="Ng P."/>
            <person name="Nilsson R."/>
            <person name="Nishiguchi S."/>
            <person name="Nishikawa S."/>
            <person name="Nori F."/>
            <person name="Ohara O."/>
            <person name="Okazaki Y."/>
            <person name="Orlando V."/>
            <person name="Pang K.C."/>
            <person name="Pavan W.J."/>
            <person name="Pavesi G."/>
            <person name="Pesole G."/>
            <person name="Petrovsky N."/>
            <person name="Piazza S."/>
            <person name="Reed J."/>
            <person name="Reid J.F."/>
            <person name="Ring B.Z."/>
            <person name="Ringwald M."/>
            <person name="Rost B."/>
            <person name="Ruan Y."/>
            <person name="Salzberg S.L."/>
            <person name="Sandelin A."/>
            <person name="Schneider C."/>
            <person name="Schoenbach C."/>
            <person name="Sekiguchi K."/>
            <person name="Semple C.A."/>
            <person name="Seno S."/>
            <person name="Sessa L."/>
            <person name="Sheng Y."/>
            <person name="Shibata Y."/>
            <person name="Shimada H."/>
            <person name="Shimada K."/>
            <person name="Silva D."/>
            <person name="Sinclair B."/>
            <person name="Sperling S."/>
            <person name="Stupka E."/>
            <person name="Sugiura K."/>
            <person name="Sultana R."/>
            <person name="Takenaka Y."/>
            <person name="Taki K."/>
            <person name="Tammoja K."/>
            <person name="Tan S.L."/>
            <person name="Tang S."/>
            <person name="Taylor M.S."/>
            <person name="Tegner J."/>
            <person name="Teichmann S.A."/>
            <person name="Ueda H.R."/>
            <person name="van Nimwegen E."/>
            <person name="Verardo R."/>
            <person name="Wei C.L."/>
            <person name="Yagi K."/>
            <person name="Yamanishi H."/>
            <person name="Zabarovsky E."/>
            <person name="Zhu S."/>
            <person name="Zimmer A."/>
            <person name="Hide W."/>
            <person name="Bult C."/>
            <person name="Grimmond S.M."/>
            <person name="Teasdale R.D."/>
            <person name="Liu E.T."/>
            <person name="Brusic V."/>
            <person name="Quackenbush J."/>
            <person name="Wahlestedt C."/>
            <person name="Mattick J.S."/>
            <person name="Hume D.A."/>
            <person name="Kai C."/>
            <person name="Sasaki D."/>
            <person name="Tomaru Y."/>
            <person name="Fukuda S."/>
            <person name="Kanamori-Katayama M."/>
            <person name="Suzuki M."/>
            <person name="Aoki J."/>
            <person name="Arakawa T."/>
            <person name="Iida J."/>
            <person name="Imamura K."/>
            <person name="Itoh M."/>
            <person name="Kato T."/>
            <person name="Kawaji H."/>
            <person name="Kawagashira N."/>
            <person name="Kawashima T."/>
            <person name="Kojima M."/>
            <person name="Kondo S."/>
            <person name="Konno H."/>
            <person name="Nakano K."/>
            <person name="Ninomiya N."/>
            <person name="Nishio T."/>
            <person name="Okada M."/>
            <person name="Plessy C."/>
            <person name="Shibata K."/>
            <person name="Shiraki T."/>
            <person name="Suzuki S."/>
            <person name="Tagami M."/>
            <person name="Waki K."/>
            <person name="Watahiki A."/>
            <person name="Okamura-Oho Y."/>
            <person name="Suzuki H."/>
            <person name="Kawai J."/>
            <person name="Hayashizaki Y."/>
        </authorList>
    </citation>
    <scope>NUCLEOTIDE SEQUENCE [LARGE SCALE MRNA]</scope>
    <source>
        <strain>C57BL/6J</strain>
        <tissue>Corpus striatum</tissue>
    </source>
</reference>
<reference key="2">
    <citation type="journal article" date="2004" name="Genome Res.">
        <title>The status, quality, and expansion of the NIH full-length cDNA project: the Mammalian Gene Collection (MGC).</title>
        <authorList>
            <consortium name="The MGC Project Team"/>
        </authorList>
    </citation>
    <scope>NUCLEOTIDE SEQUENCE [LARGE SCALE MRNA]</scope>
    <source>
        <tissue>Eye</tissue>
    </source>
</reference>
<reference key="3">
    <citation type="journal article" date="2009" name="Biochim. Biophys. Acta">
        <title>MTERF2 is a nucleoid component in mammalian mitochondria.</title>
        <authorList>
            <person name="Pellegrini M."/>
            <person name="Asin-Cayuela J."/>
            <person name="Erdjument-Bromage H."/>
            <person name="Tempst P."/>
            <person name="Larsson N.G."/>
            <person name="Gustafsson C.M."/>
        </authorList>
    </citation>
    <scope>SUBCELLULAR LOCATION</scope>
</reference>
<reference key="4">
    <citation type="journal article" date="2009" name="Cell Metab.">
        <title>mTERF2 regulates oxidative phosphorylation by modulating mtDNA transcription.</title>
        <authorList>
            <person name="Wenz T."/>
            <person name="Luca C."/>
            <person name="Torraco A."/>
            <person name="Moraes C.T."/>
        </authorList>
    </citation>
    <scope>RETRACTED PAPER</scope>
</reference>
<reference key="5">
    <citation type="journal article" date="2015" name="Cell Metab.">
        <authorList>
            <person name="Wenz T."/>
            <person name="Luca C."/>
            <person name="Torraco A."/>
            <person name="Moraes C.T."/>
        </authorList>
    </citation>
    <scope>RETRACTION NOTICE OF PUBMED:19490905</scope>
</reference>
<reference key="6">
    <citation type="journal article" date="2010" name="Cell">
        <title>A tissue-specific atlas of mouse protein phosphorylation and expression.</title>
        <authorList>
            <person name="Huttlin E.L."/>
            <person name="Jedrychowski M.P."/>
            <person name="Elias J.E."/>
            <person name="Goswami T."/>
            <person name="Rad R."/>
            <person name="Beausoleil S.A."/>
            <person name="Villen J."/>
            <person name="Haas W."/>
            <person name="Sowa M.E."/>
            <person name="Gygi S.P."/>
        </authorList>
    </citation>
    <scope>IDENTIFICATION BY MASS SPECTROMETRY [LARGE SCALE ANALYSIS]</scope>
    <source>
        <tissue>Brain</tissue>
        <tissue>Heart</tissue>
    </source>
</reference>
<feature type="transit peptide" description="Mitochondrion" evidence="1">
    <location>
        <begin position="1"/>
        <end position="35"/>
    </location>
</feature>
<feature type="chain" id="PRO_0000255465" description="Transcription termination factor 2, mitochondrial">
    <location>
        <begin position="36"/>
        <end position="385"/>
    </location>
</feature>
<comment type="function">
    <text evidence="1">Binds mitochondrial DNA and plays a role in the regulation of transcription of mitochondrial mRNA and rRNA species.</text>
</comment>
<comment type="subunit">
    <text evidence="1">Monomer.</text>
</comment>
<comment type="subcellular location">
    <subcellularLocation>
        <location evidence="2">Mitochondrion matrix</location>
        <location evidence="2">Mitochondrion nucleoid</location>
    </subcellularLocation>
</comment>
<comment type="similarity">
    <text evidence="3">Belongs to the mTERF family.</text>
</comment>
<keyword id="KW-0496">Mitochondrion</keyword>
<keyword id="KW-1135">Mitochondrion nucleoid</keyword>
<keyword id="KW-1185">Reference proteome</keyword>
<keyword id="KW-0804">Transcription</keyword>
<keyword id="KW-0805">Transcription regulation</keyword>
<keyword id="KW-0809">Transit peptide</keyword>
<name>MTEF2_MOUSE</name>
<organism>
    <name type="scientific">Mus musculus</name>
    <name type="common">Mouse</name>
    <dbReference type="NCBI Taxonomy" id="10090"/>
    <lineage>
        <taxon>Eukaryota</taxon>
        <taxon>Metazoa</taxon>
        <taxon>Chordata</taxon>
        <taxon>Craniata</taxon>
        <taxon>Vertebrata</taxon>
        <taxon>Euteleostomi</taxon>
        <taxon>Mammalia</taxon>
        <taxon>Eutheria</taxon>
        <taxon>Euarchontoglires</taxon>
        <taxon>Glires</taxon>
        <taxon>Rodentia</taxon>
        <taxon>Myomorpha</taxon>
        <taxon>Muroidea</taxon>
        <taxon>Muridae</taxon>
        <taxon>Murinae</taxon>
        <taxon>Mus</taxon>
        <taxon>Mus</taxon>
    </lineage>
</organism>